<gene>
    <name evidence="1" type="primary">acpH</name>
    <name type="ordered locus">EcE24377A_0434</name>
</gene>
<evidence type="ECO:0000255" key="1">
    <source>
        <dbReference type="HAMAP-Rule" id="MF_01950"/>
    </source>
</evidence>
<organism>
    <name type="scientific">Escherichia coli O139:H28 (strain E24377A / ETEC)</name>
    <dbReference type="NCBI Taxonomy" id="331111"/>
    <lineage>
        <taxon>Bacteria</taxon>
        <taxon>Pseudomonadati</taxon>
        <taxon>Pseudomonadota</taxon>
        <taxon>Gammaproteobacteria</taxon>
        <taxon>Enterobacterales</taxon>
        <taxon>Enterobacteriaceae</taxon>
        <taxon>Escherichia</taxon>
    </lineage>
</organism>
<dbReference type="EC" id="3.1.4.14" evidence="1"/>
<dbReference type="EMBL" id="CP000800">
    <property type="protein sequence ID" value="ABV21149.1"/>
    <property type="molecule type" value="Genomic_DNA"/>
</dbReference>
<dbReference type="RefSeq" id="WP_001009884.1">
    <property type="nucleotide sequence ID" value="NC_009801.1"/>
</dbReference>
<dbReference type="SMR" id="A7ZIF6"/>
<dbReference type="GeneID" id="93777056"/>
<dbReference type="KEGG" id="ecw:EcE24377A_0434"/>
<dbReference type="HOGENOM" id="CLU_099370_1_0_6"/>
<dbReference type="Proteomes" id="UP000001122">
    <property type="component" value="Chromosome"/>
</dbReference>
<dbReference type="GO" id="GO:0008770">
    <property type="term" value="F:[acyl-carrier-protein] phosphodiesterase activity"/>
    <property type="evidence" value="ECO:0007669"/>
    <property type="project" value="UniProtKB-UniRule"/>
</dbReference>
<dbReference type="GO" id="GO:0006633">
    <property type="term" value="P:fatty acid biosynthetic process"/>
    <property type="evidence" value="ECO:0007669"/>
    <property type="project" value="UniProtKB-UniRule"/>
</dbReference>
<dbReference type="HAMAP" id="MF_01950">
    <property type="entry name" value="AcpH"/>
    <property type="match status" value="1"/>
</dbReference>
<dbReference type="InterPro" id="IPR007431">
    <property type="entry name" value="ACP_PD"/>
</dbReference>
<dbReference type="InterPro" id="IPR023491">
    <property type="entry name" value="ACP_phosphodiesterase_gpbac"/>
</dbReference>
<dbReference type="NCBIfam" id="NF007466">
    <property type="entry name" value="PRK10045.1"/>
    <property type="match status" value="1"/>
</dbReference>
<dbReference type="PANTHER" id="PTHR38764">
    <property type="entry name" value="ACYL CARRIER PROTEIN PHOSPHODIESTERASE"/>
    <property type="match status" value="1"/>
</dbReference>
<dbReference type="PANTHER" id="PTHR38764:SF1">
    <property type="entry name" value="ACYL CARRIER PROTEIN PHOSPHODIESTERASE"/>
    <property type="match status" value="1"/>
</dbReference>
<dbReference type="Pfam" id="PF04336">
    <property type="entry name" value="ACP_PD"/>
    <property type="match status" value="1"/>
</dbReference>
<dbReference type="PIRSF" id="PIRSF011489">
    <property type="entry name" value="DUF479"/>
    <property type="match status" value="1"/>
</dbReference>
<comment type="function">
    <text evidence="1">Converts holo-ACP to apo-ACP by hydrolytic cleavage of the phosphopantetheine prosthetic group from ACP.</text>
</comment>
<comment type="catalytic activity">
    <reaction evidence="1">
        <text>holo-[ACP] + H2O = apo-[ACP] + (R)-4'-phosphopantetheine + H(+)</text>
        <dbReference type="Rhea" id="RHEA:20537"/>
        <dbReference type="Rhea" id="RHEA-COMP:9685"/>
        <dbReference type="Rhea" id="RHEA-COMP:9690"/>
        <dbReference type="ChEBI" id="CHEBI:15377"/>
        <dbReference type="ChEBI" id="CHEBI:15378"/>
        <dbReference type="ChEBI" id="CHEBI:29999"/>
        <dbReference type="ChEBI" id="CHEBI:61723"/>
        <dbReference type="ChEBI" id="CHEBI:64479"/>
        <dbReference type="EC" id="3.1.4.14"/>
    </reaction>
</comment>
<comment type="similarity">
    <text evidence="1">Belongs to the AcpH family.</text>
</comment>
<reference key="1">
    <citation type="journal article" date="2008" name="J. Bacteriol.">
        <title>The pangenome structure of Escherichia coli: comparative genomic analysis of E. coli commensal and pathogenic isolates.</title>
        <authorList>
            <person name="Rasko D.A."/>
            <person name="Rosovitz M.J."/>
            <person name="Myers G.S.A."/>
            <person name="Mongodin E.F."/>
            <person name="Fricke W.F."/>
            <person name="Gajer P."/>
            <person name="Crabtree J."/>
            <person name="Sebaihia M."/>
            <person name="Thomson N.R."/>
            <person name="Chaudhuri R."/>
            <person name="Henderson I.R."/>
            <person name="Sperandio V."/>
            <person name="Ravel J."/>
        </authorList>
    </citation>
    <scope>NUCLEOTIDE SEQUENCE [LARGE SCALE GENOMIC DNA]</scope>
    <source>
        <strain>E24377A / ETEC</strain>
    </source>
</reference>
<feature type="chain" id="PRO_1000070622" description="Acyl carrier protein phosphodiesterase">
    <location>
        <begin position="1"/>
        <end position="193"/>
    </location>
</feature>
<keyword id="KW-0275">Fatty acid biosynthesis</keyword>
<keyword id="KW-0276">Fatty acid metabolism</keyword>
<keyword id="KW-0378">Hydrolase</keyword>
<keyword id="KW-0444">Lipid biosynthesis</keyword>
<keyword id="KW-0443">Lipid metabolism</keyword>
<keyword id="KW-1185">Reference proteome</keyword>
<sequence>MNFLAHLHLAHLAESSLSGNLLADFVRGNPEESFPPDVVAGIHMHRRIDVLTDNLPEVREAREWFRSETRRVAPITLDVMWDHFLSRHWSQLSPDFPLQEFVCYAREQVMTILPDSPPRFINLNNYLWSEQWLVRYRDMDFIQNVLNGMASRRPRLDALRDSWYDLDAHYDALETRFWQFYPRMMAQASHKAL</sequence>
<protein>
    <recommendedName>
        <fullName evidence="1">Acyl carrier protein phosphodiesterase</fullName>
        <shortName evidence="1">ACP phosphodiesterase</shortName>
        <ecNumber evidence="1">3.1.4.14</ecNumber>
    </recommendedName>
</protein>
<name>ACPH_ECO24</name>
<accession>A7ZIF6</accession>
<proteinExistence type="inferred from homology"/>